<comment type="function">
    <text evidence="1">Involved in mRNA degradation. Catalyzes the phosphorolysis of single-stranded polyribonucleotides processively in the 3'- to 5'-direction.</text>
</comment>
<comment type="catalytic activity">
    <reaction evidence="1">
        <text>RNA(n+1) + phosphate = RNA(n) + a ribonucleoside 5'-diphosphate</text>
        <dbReference type="Rhea" id="RHEA:22096"/>
        <dbReference type="Rhea" id="RHEA-COMP:14527"/>
        <dbReference type="Rhea" id="RHEA-COMP:17342"/>
        <dbReference type="ChEBI" id="CHEBI:43474"/>
        <dbReference type="ChEBI" id="CHEBI:57930"/>
        <dbReference type="ChEBI" id="CHEBI:140395"/>
        <dbReference type="EC" id="2.7.7.8"/>
    </reaction>
</comment>
<comment type="cofactor">
    <cofactor evidence="1">
        <name>Mg(2+)</name>
        <dbReference type="ChEBI" id="CHEBI:18420"/>
    </cofactor>
</comment>
<comment type="subcellular location">
    <subcellularLocation>
        <location evidence="1">Cytoplasm</location>
    </subcellularLocation>
</comment>
<comment type="similarity">
    <text evidence="1">Belongs to the polyribonucleotide nucleotidyltransferase family.</text>
</comment>
<reference key="1">
    <citation type="journal article" date="2007" name="J. Bacteriol.">
        <title>The complete genome sequence of the lactic acid bacterial paradigm Lactococcus lactis subsp. cremoris MG1363.</title>
        <authorList>
            <person name="Wegmann U."/>
            <person name="O'Connell-Motherway M."/>
            <person name="Zomer A."/>
            <person name="Buist G."/>
            <person name="Shearman C."/>
            <person name="Canchaya C."/>
            <person name="Ventura M."/>
            <person name="Goesmann A."/>
            <person name="Gasson M.J."/>
            <person name="Kuipers O.P."/>
            <person name="van Sinderen D."/>
            <person name="Kok J."/>
        </authorList>
    </citation>
    <scope>NUCLEOTIDE SEQUENCE [LARGE SCALE GENOMIC DNA]</scope>
    <source>
        <strain>MG1363</strain>
    </source>
</reference>
<proteinExistence type="inferred from homology"/>
<gene>
    <name evidence="1" type="primary">pnp</name>
    <name type="ordered locus">llmg_2044</name>
</gene>
<organism>
    <name type="scientific">Lactococcus lactis subsp. cremoris (strain MG1363)</name>
    <dbReference type="NCBI Taxonomy" id="416870"/>
    <lineage>
        <taxon>Bacteria</taxon>
        <taxon>Bacillati</taxon>
        <taxon>Bacillota</taxon>
        <taxon>Bacilli</taxon>
        <taxon>Lactobacillales</taxon>
        <taxon>Streptococcaceae</taxon>
        <taxon>Lactococcus</taxon>
        <taxon>Lactococcus cremoris subsp. cremoris</taxon>
    </lineage>
</organism>
<sequence>MAKETFSIEFAGRTLTVETGQVAKQANGAVVVRYGDTTVLTAATMGKMATGDFFPLQVNYEEKMYAAGKFPGGFNKREARPSTDATLTARLIDRPIRPMFAEGFRNEVQVINTVLSYDENASGRVAAMFGSSLALAISDIPFDGPIAGVEVAYIDGKYIINPTVAEKEASSLELSVAGNINAINMVESGAKELSEEVMLGALLAGHNAVKELIEFQNEIVAKVGKEKAEVELLHVDEDLKAEVIAAYNSDLQKAVQVEEKLAREAATKAVKEAIISVYSAKYENDENLSIILRDLAEILEGMEHAEVRRLITEDKIRPDGRKIDEIRPLDAEIDFTPRSITHGTGLFTRGQTQALSTLTLAPMNEAQIIDGLNDEYKKRFMHHYNFPQYSVGETGRYGAPGRREIGHGALGERALEQVLPSLEEFPYAIRLVAEVLESNGSSSQASICAGTLALMAGGVPIKAPVAGIAMGLISDGTNYTVLTDIQGLEDHFGDMDFKVAGTREGITALQMDIKISGITPEILAEALAQAKTARFQILDVIEATIAQPREELAPSAPKIDTITIPVDKIKVVIGKGGEQIDKIIAETGVKIDIDDEGLCSIFSSDQSAIDRAKEIIAELVREAKVGEVYEAKVVRIESFGAFVNLFGKQDAMVHISEMAWARTAKVEDVMKLGDVVKVKIMKIDDKGRVDASMRALIEKPEGYVEPERKPRERRDNKDRRNGNGFDRRNNDRNNHNNNSGNHSFELRERKSHVDHEFPELSTKKPE</sequence>
<keyword id="KW-0963">Cytoplasm</keyword>
<keyword id="KW-0460">Magnesium</keyword>
<keyword id="KW-0479">Metal-binding</keyword>
<keyword id="KW-0548">Nucleotidyltransferase</keyword>
<keyword id="KW-0694">RNA-binding</keyword>
<keyword id="KW-0808">Transferase</keyword>
<protein>
    <recommendedName>
        <fullName evidence="1">Polyribonucleotide nucleotidyltransferase</fullName>
        <ecNumber evidence="1">2.7.7.8</ecNumber>
    </recommendedName>
    <alternativeName>
        <fullName evidence="1">Polynucleotide phosphorylase</fullName>
        <shortName evidence="1">PNPase</shortName>
    </alternativeName>
</protein>
<name>PNP_LACLM</name>
<dbReference type="EC" id="2.7.7.8" evidence="1"/>
<dbReference type="EMBL" id="AM406671">
    <property type="protein sequence ID" value="CAL98611.1"/>
    <property type="molecule type" value="Genomic_DNA"/>
</dbReference>
<dbReference type="SMR" id="A2RMS5"/>
<dbReference type="STRING" id="416870.llmg_2044"/>
<dbReference type="KEGG" id="llm:llmg_2044"/>
<dbReference type="eggNOG" id="COG1185">
    <property type="taxonomic scope" value="Bacteria"/>
</dbReference>
<dbReference type="HOGENOM" id="CLU_004217_2_2_9"/>
<dbReference type="OrthoDB" id="9804305at2"/>
<dbReference type="PhylomeDB" id="A2RMS5"/>
<dbReference type="Proteomes" id="UP000000364">
    <property type="component" value="Chromosome"/>
</dbReference>
<dbReference type="GO" id="GO:0005829">
    <property type="term" value="C:cytosol"/>
    <property type="evidence" value="ECO:0007669"/>
    <property type="project" value="TreeGrafter"/>
</dbReference>
<dbReference type="GO" id="GO:0000175">
    <property type="term" value="F:3'-5'-RNA exonuclease activity"/>
    <property type="evidence" value="ECO:0007669"/>
    <property type="project" value="TreeGrafter"/>
</dbReference>
<dbReference type="GO" id="GO:0000287">
    <property type="term" value="F:magnesium ion binding"/>
    <property type="evidence" value="ECO:0007669"/>
    <property type="project" value="UniProtKB-UniRule"/>
</dbReference>
<dbReference type="GO" id="GO:0004654">
    <property type="term" value="F:polyribonucleotide nucleotidyltransferase activity"/>
    <property type="evidence" value="ECO:0007669"/>
    <property type="project" value="UniProtKB-UniRule"/>
</dbReference>
<dbReference type="GO" id="GO:0003723">
    <property type="term" value="F:RNA binding"/>
    <property type="evidence" value="ECO:0007669"/>
    <property type="project" value="UniProtKB-UniRule"/>
</dbReference>
<dbReference type="GO" id="GO:0006402">
    <property type="term" value="P:mRNA catabolic process"/>
    <property type="evidence" value="ECO:0007669"/>
    <property type="project" value="UniProtKB-UniRule"/>
</dbReference>
<dbReference type="GO" id="GO:0006396">
    <property type="term" value="P:RNA processing"/>
    <property type="evidence" value="ECO:0007669"/>
    <property type="project" value="InterPro"/>
</dbReference>
<dbReference type="CDD" id="cd02393">
    <property type="entry name" value="KH-I_PNPase"/>
    <property type="match status" value="1"/>
</dbReference>
<dbReference type="CDD" id="cd11363">
    <property type="entry name" value="RNase_PH_PNPase_1"/>
    <property type="match status" value="1"/>
</dbReference>
<dbReference type="CDD" id="cd11364">
    <property type="entry name" value="RNase_PH_PNPase_2"/>
    <property type="match status" value="1"/>
</dbReference>
<dbReference type="FunFam" id="3.30.1370.10:FF:000001">
    <property type="entry name" value="Polyribonucleotide nucleotidyltransferase"/>
    <property type="match status" value="1"/>
</dbReference>
<dbReference type="FunFam" id="3.30.230.70:FF:000001">
    <property type="entry name" value="Polyribonucleotide nucleotidyltransferase"/>
    <property type="match status" value="1"/>
</dbReference>
<dbReference type="FunFam" id="3.30.230.70:FF:000002">
    <property type="entry name" value="Polyribonucleotide nucleotidyltransferase"/>
    <property type="match status" value="1"/>
</dbReference>
<dbReference type="Gene3D" id="3.30.230.70">
    <property type="entry name" value="GHMP Kinase, N-terminal domain"/>
    <property type="match status" value="2"/>
</dbReference>
<dbReference type="Gene3D" id="3.30.1370.10">
    <property type="entry name" value="K Homology domain, type 1"/>
    <property type="match status" value="1"/>
</dbReference>
<dbReference type="Gene3D" id="2.40.50.140">
    <property type="entry name" value="Nucleic acid-binding proteins"/>
    <property type="match status" value="1"/>
</dbReference>
<dbReference type="HAMAP" id="MF_01595">
    <property type="entry name" value="PNPase"/>
    <property type="match status" value="1"/>
</dbReference>
<dbReference type="InterPro" id="IPR001247">
    <property type="entry name" value="ExoRNase_PH_dom1"/>
</dbReference>
<dbReference type="InterPro" id="IPR015847">
    <property type="entry name" value="ExoRNase_PH_dom2"/>
</dbReference>
<dbReference type="InterPro" id="IPR036345">
    <property type="entry name" value="ExoRNase_PH_dom2_sf"/>
</dbReference>
<dbReference type="InterPro" id="IPR004087">
    <property type="entry name" value="KH_dom"/>
</dbReference>
<dbReference type="InterPro" id="IPR004088">
    <property type="entry name" value="KH_dom_type_1"/>
</dbReference>
<dbReference type="InterPro" id="IPR036612">
    <property type="entry name" value="KH_dom_type_1_sf"/>
</dbReference>
<dbReference type="InterPro" id="IPR012340">
    <property type="entry name" value="NA-bd_OB-fold"/>
</dbReference>
<dbReference type="InterPro" id="IPR012162">
    <property type="entry name" value="PNPase"/>
</dbReference>
<dbReference type="InterPro" id="IPR027408">
    <property type="entry name" value="PNPase/RNase_PH_dom_sf"/>
</dbReference>
<dbReference type="InterPro" id="IPR015848">
    <property type="entry name" value="PNPase_PH_RNA-bd_bac/org-type"/>
</dbReference>
<dbReference type="InterPro" id="IPR036456">
    <property type="entry name" value="PNPase_PH_RNA-bd_sf"/>
</dbReference>
<dbReference type="InterPro" id="IPR020568">
    <property type="entry name" value="Ribosomal_Su5_D2-typ_SF"/>
</dbReference>
<dbReference type="InterPro" id="IPR003029">
    <property type="entry name" value="S1_domain"/>
</dbReference>
<dbReference type="NCBIfam" id="TIGR03591">
    <property type="entry name" value="polynuc_phos"/>
    <property type="match status" value="1"/>
</dbReference>
<dbReference type="NCBIfam" id="NF008805">
    <property type="entry name" value="PRK11824.1"/>
    <property type="match status" value="1"/>
</dbReference>
<dbReference type="PANTHER" id="PTHR11252">
    <property type="entry name" value="POLYRIBONUCLEOTIDE NUCLEOTIDYLTRANSFERASE"/>
    <property type="match status" value="1"/>
</dbReference>
<dbReference type="PANTHER" id="PTHR11252:SF0">
    <property type="entry name" value="POLYRIBONUCLEOTIDE NUCLEOTIDYLTRANSFERASE 1, MITOCHONDRIAL"/>
    <property type="match status" value="1"/>
</dbReference>
<dbReference type="Pfam" id="PF00013">
    <property type="entry name" value="KH_1"/>
    <property type="match status" value="1"/>
</dbReference>
<dbReference type="Pfam" id="PF03726">
    <property type="entry name" value="PNPase"/>
    <property type="match status" value="1"/>
</dbReference>
<dbReference type="Pfam" id="PF01138">
    <property type="entry name" value="RNase_PH"/>
    <property type="match status" value="2"/>
</dbReference>
<dbReference type="Pfam" id="PF03725">
    <property type="entry name" value="RNase_PH_C"/>
    <property type="match status" value="2"/>
</dbReference>
<dbReference type="Pfam" id="PF00575">
    <property type="entry name" value="S1"/>
    <property type="match status" value="1"/>
</dbReference>
<dbReference type="PIRSF" id="PIRSF005499">
    <property type="entry name" value="PNPase"/>
    <property type="match status" value="1"/>
</dbReference>
<dbReference type="SMART" id="SM00322">
    <property type="entry name" value="KH"/>
    <property type="match status" value="1"/>
</dbReference>
<dbReference type="SMART" id="SM00316">
    <property type="entry name" value="S1"/>
    <property type="match status" value="1"/>
</dbReference>
<dbReference type="SUPFAM" id="SSF54791">
    <property type="entry name" value="Eukaryotic type KH-domain (KH-domain type I)"/>
    <property type="match status" value="1"/>
</dbReference>
<dbReference type="SUPFAM" id="SSF50249">
    <property type="entry name" value="Nucleic acid-binding proteins"/>
    <property type="match status" value="1"/>
</dbReference>
<dbReference type="SUPFAM" id="SSF46915">
    <property type="entry name" value="Polynucleotide phosphorylase/guanosine pentaphosphate synthase (PNPase/GPSI), domain 3"/>
    <property type="match status" value="1"/>
</dbReference>
<dbReference type="SUPFAM" id="SSF55666">
    <property type="entry name" value="Ribonuclease PH domain 2-like"/>
    <property type="match status" value="2"/>
</dbReference>
<dbReference type="SUPFAM" id="SSF54211">
    <property type="entry name" value="Ribosomal protein S5 domain 2-like"/>
    <property type="match status" value="2"/>
</dbReference>
<dbReference type="PROSITE" id="PS50084">
    <property type="entry name" value="KH_TYPE_1"/>
    <property type="match status" value="1"/>
</dbReference>
<dbReference type="PROSITE" id="PS50126">
    <property type="entry name" value="S1"/>
    <property type="match status" value="1"/>
</dbReference>
<feature type="chain" id="PRO_0000329688" description="Polyribonucleotide nucleotidyltransferase">
    <location>
        <begin position="1"/>
        <end position="766"/>
    </location>
</feature>
<feature type="domain" description="KH" evidence="1">
    <location>
        <begin position="557"/>
        <end position="616"/>
    </location>
</feature>
<feature type="domain" description="S1 motif" evidence="1">
    <location>
        <begin position="626"/>
        <end position="694"/>
    </location>
</feature>
<feature type="region of interest" description="Disordered" evidence="2">
    <location>
        <begin position="700"/>
        <end position="766"/>
    </location>
</feature>
<feature type="compositionally biased region" description="Basic and acidic residues" evidence="2">
    <location>
        <begin position="700"/>
        <end position="734"/>
    </location>
</feature>
<feature type="compositionally biased region" description="Basic and acidic residues" evidence="2">
    <location>
        <begin position="744"/>
        <end position="766"/>
    </location>
</feature>
<feature type="binding site" evidence="1">
    <location>
        <position position="490"/>
    </location>
    <ligand>
        <name>Mg(2+)</name>
        <dbReference type="ChEBI" id="CHEBI:18420"/>
    </ligand>
</feature>
<feature type="binding site" evidence="1">
    <location>
        <position position="496"/>
    </location>
    <ligand>
        <name>Mg(2+)</name>
        <dbReference type="ChEBI" id="CHEBI:18420"/>
    </ligand>
</feature>
<accession>A2RMS5</accession>
<evidence type="ECO:0000255" key="1">
    <source>
        <dbReference type="HAMAP-Rule" id="MF_01595"/>
    </source>
</evidence>
<evidence type="ECO:0000256" key="2">
    <source>
        <dbReference type="SAM" id="MobiDB-lite"/>
    </source>
</evidence>